<evidence type="ECO:0000250" key="1">
    <source>
        <dbReference type="UniProtKB" id="P0AFG3"/>
    </source>
</evidence>
<evidence type="ECO:0000305" key="2"/>
<gene>
    <name type="primary">sucA</name>
    <name type="ordered locus">CBU_1399</name>
</gene>
<organism>
    <name type="scientific">Coxiella burnetii (strain RSA 493 / Nine Mile phase I)</name>
    <dbReference type="NCBI Taxonomy" id="227377"/>
    <lineage>
        <taxon>Bacteria</taxon>
        <taxon>Pseudomonadati</taxon>
        <taxon>Pseudomonadota</taxon>
        <taxon>Gammaproteobacteria</taxon>
        <taxon>Legionellales</taxon>
        <taxon>Coxiellaceae</taxon>
        <taxon>Coxiella</taxon>
    </lineage>
</organism>
<proteinExistence type="inferred from homology"/>
<dbReference type="EC" id="1.2.4.2" evidence="1"/>
<dbReference type="EMBL" id="U07789">
    <property type="protein sequence ID" value="AAA61785.1"/>
    <property type="molecule type" value="Unassigned_DNA"/>
</dbReference>
<dbReference type="EMBL" id="X77919">
    <property type="protein sequence ID" value="CAA54874.1"/>
    <property type="molecule type" value="Genomic_DNA"/>
</dbReference>
<dbReference type="EMBL" id="AE016828">
    <property type="protein sequence ID" value="AAO90898.1"/>
    <property type="molecule type" value="Genomic_DNA"/>
</dbReference>
<dbReference type="EMBL" id="L33409">
    <property type="protein sequence ID" value="AAA74135.1"/>
    <property type="molecule type" value="Genomic_DNA"/>
</dbReference>
<dbReference type="PIR" id="S42874">
    <property type="entry name" value="S42874"/>
</dbReference>
<dbReference type="RefSeq" id="NP_820384.1">
    <property type="nucleotide sequence ID" value="NC_002971.4"/>
</dbReference>
<dbReference type="RefSeq" id="WP_010958201.1">
    <property type="nucleotide sequence ID" value="NZ_CCYB01000027.1"/>
</dbReference>
<dbReference type="SMR" id="P51056"/>
<dbReference type="STRING" id="227377.CBU_1399"/>
<dbReference type="DNASU" id="1209305"/>
<dbReference type="EnsemblBacteria" id="AAO90898">
    <property type="protein sequence ID" value="AAO90898"/>
    <property type="gene ID" value="CBU_1399"/>
</dbReference>
<dbReference type="GeneID" id="1209305"/>
<dbReference type="KEGG" id="cbu:CBU_1399"/>
<dbReference type="PATRIC" id="fig|227377.7.peg.1401"/>
<dbReference type="eggNOG" id="COG0567">
    <property type="taxonomic scope" value="Bacteria"/>
</dbReference>
<dbReference type="HOGENOM" id="CLU_004709_1_0_6"/>
<dbReference type="OrthoDB" id="9759785at2"/>
<dbReference type="Proteomes" id="UP000002671">
    <property type="component" value="Chromosome"/>
</dbReference>
<dbReference type="GO" id="GO:0005829">
    <property type="term" value="C:cytosol"/>
    <property type="evidence" value="ECO:0000318"/>
    <property type="project" value="GO_Central"/>
</dbReference>
<dbReference type="GO" id="GO:0045252">
    <property type="term" value="C:oxoglutarate dehydrogenase complex"/>
    <property type="evidence" value="ECO:0000318"/>
    <property type="project" value="GO_Central"/>
</dbReference>
<dbReference type="GO" id="GO:0004591">
    <property type="term" value="F:oxoglutarate dehydrogenase (succinyl-transferring) activity"/>
    <property type="evidence" value="ECO:0000318"/>
    <property type="project" value="GO_Central"/>
</dbReference>
<dbReference type="GO" id="GO:0030976">
    <property type="term" value="F:thiamine pyrophosphate binding"/>
    <property type="evidence" value="ECO:0007669"/>
    <property type="project" value="InterPro"/>
</dbReference>
<dbReference type="GO" id="GO:0006096">
    <property type="term" value="P:glycolytic process"/>
    <property type="evidence" value="ECO:0007669"/>
    <property type="project" value="UniProtKB-KW"/>
</dbReference>
<dbReference type="GO" id="GO:0006099">
    <property type="term" value="P:tricarboxylic acid cycle"/>
    <property type="evidence" value="ECO:0000318"/>
    <property type="project" value="GO_Central"/>
</dbReference>
<dbReference type="CDD" id="cd02016">
    <property type="entry name" value="TPP_E1_OGDC_like"/>
    <property type="match status" value="1"/>
</dbReference>
<dbReference type="FunFam" id="1.10.287.1150:FF:000004">
    <property type="entry name" value="2-oxoglutarate dehydrogenase E1 component"/>
    <property type="match status" value="1"/>
</dbReference>
<dbReference type="Gene3D" id="3.40.50.12470">
    <property type="match status" value="1"/>
</dbReference>
<dbReference type="Gene3D" id="3.40.50.970">
    <property type="match status" value="1"/>
</dbReference>
<dbReference type="Gene3D" id="3.40.50.11610">
    <property type="entry name" value="Multifunctional 2-oxoglutarate metabolism enzyme, C-terminal domain"/>
    <property type="match status" value="1"/>
</dbReference>
<dbReference type="Gene3D" id="1.10.287.1150">
    <property type="entry name" value="TPP helical domain"/>
    <property type="match status" value="1"/>
</dbReference>
<dbReference type="InterPro" id="IPR032106">
    <property type="entry name" value="2-oxogl_dehyd_N"/>
</dbReference>
<dbReference type="InterPro" id="IPR011603">
    <property type="entry name" value="2oxoglutarate_DH_E1"/>
</dbReference>
<dbReference type="InterPro" id="IPR001017">
    <property type="entry name" value="DH_E1"/>
</dbReference>
<dbReference type="InterPro" id="IPR042179">
    <property type="entry name" value="KGD_C_sf"/>
</dbReference>
<dbReference type="InterPro" id="IPR031717">
    <property type="entry name" value="ODO-1/KGD_C"/>
</dbReference>
<dbReference type="InterPro" id="IPR029061">
    <property type="entry name" value="THDP-binding"/>
</dbReference>
<dbReference type="InterPro" id="IPR005475">
    <property type="entry name" value="Transketolase-like_Pyr-bd"/>
</dbReference>
<dbReference type="NCBIfam" id="TIGR00239">
    <property type="entry name" value="2oxo_dh_E1"/>
    <property type="match status" value="1"/>
</dbReference>
<dbReference type="NCBIfam" id="NF006914">
    <property type="entry name" value="PRK09404.1"/>
    <property type="match status" value="1"/>
</dbReference>
<dbReference type="NCBIfam" id="NF008907">
    <property type="entry name" value="PRK12270.1"/>
    <property type="match status" value="1"/>
</dbReference>
<dbReference type="PANTHER" id="PTHR23152:SF4">
    <property type="entry name" value="2-OXOADIPATE DEHYDROGENASE COMPLEX COMPONENT E1"/>
    <property type="match status" value="1"/>
</dbReference>
<dbReference type="PANTHER" id="PTHR23152">
    <property type="entry name" value="2-OXOGLUTARATE DEHYDROGENASE"/>
    <property type="match status" value="1"/>
</dbReference>
<dbReference type="Pfam" id="PF16078">
    <property type="entry name" value="2-oxogl_dehyd_N"/>
    <property type="match status" value="1"/>
</dbReference>
<dbReference type="Pfam" id="PF00676">
    <property type="entry name" value="E1_dh"/>
    <property type="match status" value="1"/>
</dbReference>
<dbReference type="Pfam" id="PF16870">
    <property type="entry name" value="OxoGdeHyase_C"/>
    <property type="match status" value="1"/>
</dbReference>
<dbReference type="Pfam" id="PF02779">
    <property type="entry name" value="Transket_pyr"/>
    <property type="match status" value="1"/>
</dbReference>
<dbReference type="PIRSF" id="PIRSF000157">
    <property type="entry name" value="Oxoglu_dh_E1"/>
    <property type="match status" value="1"/>
</dbReference>
<dbReference type="SMART" id="SM00861">
    <property type="entry name" value="Transket_pyr"/>
    <property type="match status" value="1"/>
</dbReference>
<dbReference type="SUPFAM" id="SSF52518">
    <property type="entry name" value="Thiamin diphosphate-binding fold (THDP-binding)"/>
    <property type="match status" value="2"/>
</dbReference>
<accession>P51056</accession>
<feature type="chain" id="PRO_0000162190" description="2-oxoglutarate dehydrogenase E1 component">
    <location>
        <begin position="1"/>
        <end position="934"/>
    </location>
</feature>
<feature type="sequence conflict" description="In Ref. 1; AAA61785." evidence="2" ref="1">
    <original>A</original>
    <variation>R</variation>
    <location>
        <position position="600"/>
    </location>
</feature>
<feature type="sequence conflict" description="In Ref. 1; AAA61785." evidence="2" ref="1">
    <original>VGQDSRRGTFFHRHAVV</original>
    <variation>SVKIPDEALFFIAMPLW</variation>
    <location>
        <begin position="614"/>
        <end position="630"/>
    </location>
</feature>
<feature type="sequence conflict" description="In Ref. 1; AAA61785." evidence="2" ref="1">
    <original>PKSVL</original>
    <variation>QKCA</variation>
    <location>
        <begin position="778"/>
        <end position="782"/>
    </location>
</feature>
<feature type="sequence conflict" description="In Ref. 1; AAA61785." evidence="2" ref="1">
    <original>HDPKKITR</original>
    <variation>RIRKKSPA</variation>
    <location>
        <begin position="809"/>
        <end position="816"/>
    </location>
</feature>
<keyword id="KW-0324">Glycolysis</keyword>
<keyword id="KW-0560">Oxidoreductase</keyword>
<keyword id="KW-1185">Reference proteome</keyword>
<keyword id="KW-0786">Thiamine pyrophosphate</keyword>
<sequence>MPKITMQQFQKNSYLADNNAGYIETLYENFLKDPHSVNEEWRSYFRTLTNGASTPDISHATIREEFRELARKPRSISPTAITPAAEQAAVDLLIEGYRRFGHLNAKINPLGDNRPVDSRLELGHYNLTESDFNKTFATYGLLNKPKATLKEIYTRLREIYCGSIGVQYSTISDERERNWLRDYVEQRLPSIEFDKETKRNILQQLVTAESLEKYLDTKYVGQVRYSLEGGDSLIPLLDELTKRARHQKIEEIVICMAHRGRVNVLLNIMGQSAAELFQEFEGKKDYGLMSGDVKYHRGYSRDVKTDAGPIHLSLAFNPSHLEFICPVAMGSVRARQERQNGHKRDYAMTVMIHGDASFSGEGIVMEALSMSQTRAHHVGGSIHIILNNQVGFTTSNPHDARSSMYCSDIAKMLDAPVFHVNGDDPEAVVAVTQLALDYRMAFHKDVFIDLVCYRRHGHQEVDDPMPTQPAMYKVIQEHPTTRTLYAKNLIEKKLCTAEEVDQWIDDYRDRLDRGRQLVETLPEGLSAHYAANWTPYLGQDWTTLVDTTLPLKKLKALGKKFSTLPNTLHLHRKVEAIYKARLEMAEGKTPMDWGFAEMLAYASLLEEGFSVRLVGQDSRRGTFFHRHAVVFDQETGKEYEPLKHLSDKQAAPHIYDSLLCEAGALGFEYGYSTADPNSLVIWEAQFGDFANVAQVIVDQFISSGWQKWNRLSGIVLFLPHGYEGKGPEHSSARLERYLQLCAQNNMQVCAPTTPSQIFHLLRRQVLRPYRKPLVVLTPKSVLRNKLAVSSLEDLARGQLKLLIPEIEKHDPKKITRVILCSGKVYYDLLAKRREHKGKLNHIAMIRIEQLYPFPYDELKAELEKYPNAKQVIWCQEEPKNQGAWFCTRHRLIKCMRDDQTLEYVGRSAFAAPAAGYSALYVKLQEQLVNQALEI</sequence>
<name>ODO1_COXBU</name>
<protein>
    <recommendedName>
        <fullName>2-oxoglutarate dehydrogenase E1 component</fullName>
        <ecNumber evidence="1">1.2.4.2</ecNumber>
    </recommendedName>
    <alternativeName>
        <fullName>Alpha-ketoglutarate dehydrogenase</fullName>
    </alternativeName>
</protein>
<comment type="function">
    <text evidence="1">E1 component of the 2-oxoglutarate dehydrogenase (OGDH) complex which catalyzes the decarboxylation of 2-oxoglutarate, the first step in the conversion of 2-oxoglutarate to succinyl-CoA and CO(2).</text>
</comment>
<comment type="catalytic activity">
    <reaction evidence="1">
        <text>N(6)-[(R)-lipoyl]-L-lysyl-[protein] + 2-oxoglutarate + H(+) = N(6)-[(R)-S(8)-succinyldihydrolipoyl]-L-lysyl-[protein] + CO2</text>
        <dbReference type="Rhea" id="RHEA:12188"/>
        <dbReference type="Rhea" id="RHEA-COMP:10474"/>
        <dbReference type="Rhea" id="RHEA-COMP:20092"/>
        <dbReference type="ChEBI" id="CHEBI:15378"/>
        <dbReference type="ChEBI" id="CHEBI:16526"/>
        <dbReference type="ChEBI" id="CHEBI:16810"/>
        <dbReference type="ChEBI" id="CHEBI:83099"/>
        <dbReference type="ChEBI" id="CHEBI:83120"/>
        <dbReference type="EC" id="1.2.4.2"/>
    </reaction>
</comment>
<comment type="cofactor">
    <cofactor evidence="1">
        <name>thiamine diphosphate</name>
        <dbReference type="ChEBI" id="CHEBI:58937"/>
    </cofactor>
</comment>
<comment type="subunit">
    <text evidence="1">Homodimer. Part of the 2-oxoglutarate dehydrogenase (OGDH) complex composed of E1 (2-oxoglutarate dehydrogenase), E2 (dihydrolipoamide succinyltransferase) and E3 (dihydrolipoamide dehydrogenase); the complex contains multiple copies of the three enzymatic components (E1, E2 and E3).</text>
</comment>
<comment type="similarity">
    <text evidence="2">Belongs to the alpha-ketoglutarate dehydrogenase family.</text>
</comment>
<reference key="1">
    <citation type="submission" date="1995-02" db="EMBL/GenBank/DDBJ databases">
        <authorList>
            <person name="Schimmels J.A."/>
            <person name="Mallavia L.P."/>
        </authorList>
    </citation>
    <scope>NUCLEOTIDE SEQUENCE [GENOMIC DNA]</scope>
    <source>
        <strain>Nine Mile</strain>
    </source>
</reference>
<reference key="2">
    <citation type="submission" date="1994-03" db="EMBL/GenBank/DDBJ databases">
        <authorList>
            <person name="Thiele D."/>
            <person name="Willems H."/>
            <person name="Oswald W."/>
            <person name="Krauss H."/>
        </authorList>
    </citation>
    <scope>NUCLEOTIDE SEQUENCE [GENOMIC DNA]</scope>
    <source>
        <strain>Nine Mile phase I</strain>
    </source>
</reference>
<reference key="3">
    <citation type="journal article" date="2003" name="Proc. Natl. Acad. Sci. U.S.A.">
        <title>Complete genome sequence of the Q-fever pathogen, Coxiella burnetii.</title>
        <authorList>
            <person name="Seshadri R."/>
            <person name="Paulsen I.T."/>
            <person name="Eisen J.A."/>
            <person name="Read T.D."/>
            <person name="Nelson K.E."/>
            <person name="Nelson W.C."/>
            <person name="Ward N.L."/>
            <person name="Tettelin H."/>
            <person name="Davidsen T.M."/>
            <person name="Beanan M.J."/>
            <person name="DeBoy R.T."/>
            <person name="Daugherty S.C."/>
            <person name="Brinkac L.M."/>
            <person name="Madupu R."/>
            <person name="Dodson R.J."/>
            <person name="Khouri H.M."/>
            <person name="Lee K.H."/>
            <person name="Carty H.A."/>
            <person name="Scanlan D."/>
            <person name="Heinzen R.A."/>
            <person name="Thompson H.A."/>
            <person name="Samuel J.E."/>
            <person name="Fraser C.M."/>
            <person name="Heidelberg J.F."/>
        </authorList>
    </citation>
    <scope>NUCLEOTIDE SEQUENCE [LARGE SCALE GENOMIC DNA]</scope>
    <source>
        <strain>RSA 493 / Nine Mile phase I</strain>
    </source>
</reference>
<reference key="4">
    <citation type="journal article" date="1995" name="Gene">
        <title>Characterization of the succinate dehydrogenase-encoding gene cluster (sdh) from the rickettsia Coxiella burnetii.</title>
        <authorList>
            <person name="Heinzen R.A."/>
            <person name="Mo Y.-Y."/>
            <person name="Robertson S.J."/>
            <person name="Mallavia L.P."/>
        </authorList>
    </citation>
    <scope>NUCLEOTIDE SEQUENCE [GENOMIC DNA] OF 1-280</scope>
    <source>
        <strain>Nine Mile</strain>
    </source>
</reference>